<protein>
    <recommendedName>
        <fullName evidence="1">3-phenylpropionate-dihydrodiol/cinnamic acid-dihydrodiol dehydrogenase</fullName>
        <ecNumber evidence="1">1.3.1.87</ecNumber>
    </recommendedName>
    <alternativeName>
        <fullName evidence="1">2,3-dihydroxy-2,3-dihydrophenylpropionate dehydrogenase</fullName>
    </alternativeName>
    <alternativeName>
        <fullName evidence="1">3-(cis-5,6-dihydroxycyclohexa-1,3-dien-1-yl)propanoate dehydrogenase</fullName>
    </alternativeName>
    <alternativeName>
        <fullName evidence="1">CI-dihydrodiol dehydrogenase</fullName>
    </alternativeName>
    <alternativeName>
        <fullName evidence="1">Cis-3-(2-carboxyethenyl)-3,5-cyclohexadiene-1,2-diol dehydrogenase</fullName>
    </alternativeName>
    <alternativeName>
        <fullName evidence="1">Cis-3-(2-carboxyethyl)-3,5-cyclohexadiene-1,2-diol dehydrogenase</fullName>
    </alternativeName>
    <alternativeName>
        <fullName evidence="1">PP-dihydrodiol dehydrogenase</fullName>
    </alternativeName>
</protein>
<keyword id="KW-0058">Aromatic hydrocarbons catabolism</keyword>
<keyword id="KW-0520">NAD</keyword>
<keyword id="KW-0560">Oxidoreductase</keyword>
<keyword id="KW-1185">Reference proteome</keyword>
<sequence length="270" mass="28470">MSDLHNESIFITGGGSGLGLALVERFIEEGAQVATLELSAAKVASLRQRFGEHILAVEGNVTCYADYQRAVDQILTRSGKLDCFIGNAGIWDHNASLVNTPAETLETGFHELFNVNVLGYLLGAKACAPALIASEGSMIFTLSNAAWYPGGGGPLYTASKHAATGLIRQLAYELAPKVRVNGVGPCGMASDLRGPQALGQSETSIMQSLTPEKIAAILPLQFFPQPADFTGPYVMLASRRNNRALSGVMINADAGLAIRGIRHVAAGLDL</sequence>
<gene>
    <name evidence="1" type="primary">hcaB</name>
    <name type="ordered locus">EC55989_2827</name>
</gene>
<dbReference type="EC" id="1.3.1.87" evidence="1"/>
<dbReference type="EMBL" id="CU928145">
    <property type="protein sequence ID" value="CAU98699.1"/>
    <property type="molecule type" value="Genomic_DNA"/>
</dbReference>
<dbReference type="RefSeq" id="WP_001281377.1">
    <property type="nucleotide sequence ID" value="NC_011748.1"/>
</dbReference>
<dbReference type="SMR" id="B7LDD3"/>
<dbReference type="GeneID" id="75206234"/>
<dbReference type="KEGG" id="eck:EC55989_2827"/>
<dbReference type="HOGENOM" id="CLU_010194_1_0_6"/>
<dbReference type="UniPathway" id="UPA00714"/>
<dbReference type="Proteomes" id="UP000000746">
    <property type="component" value="Chromosome"/>
</dbReference>
<dbReference type="GO" id="GO:0018498">
    <property type="term" value="F:2,3-dihydroxy-2,3-dihydro-phenylpropionate dehydrogenase activity"/>
    <property type="evidence" value="ECO:0007669"/>
    <property type="project" value="UniProtKB-UniRule"/>
</dbReference>
<dbReference type="GO" id="GO:0019380">
    <property type="term" value="P:3-phenylpropionate catabolic process"/>
    <property type="evidence" value="ECO:0007669"/>
    <property type="project" value="UniProtKB-UniRule"/>
</dbReference>
<dbReference type="CDD" id="cd05348">
    <property type="entry name" value="BphB-like_SDR_c"/>
    <property type="match status" value="1"/>
</dbReference>
<dbReference type="FunFam" id="3.40.50.720:FF:000151">
    <property type="entry name" value="3-phenylpropionate-dihydrodiol/cinnamic acid-dihydrodiol dehydrogenase"/>
    <property type="match status" value="1"/>
</dbReference>
<dbReference type="Gene3D" id="3.40.50.720">
    <property type="entry name" value="NAD(P)-binding Rossmann-like Domain"/>
    <property type="match status" value="1"/>
</dbReference>
<dbReference type="HAMAP" id="MF_01647">
    <property type="entry name" value="HcaB"/>
    <property type="match status" value="1"/>
</dbReference>
<dbReference type="InterPro" id="IPR047950">
    <property type="entry name" value="BphB-like_SDR"/>
</dbReference>
<dbReference type="InterPro" id="IPR023643">
    <property type="entry name" value="Dihydrodiol_DH_HcaB"/>
</dbReference>
<dbReference type="InterPro" id="IPR036291">
    <property type="entry name" value="NAD(P)-bd_dom_sf"/>
</dbReference>
<dbReference type="InterPro" id="IPR020904">
    <property type="entry name" value="Sc_DH/Rdtase_CS"/>
</dbReference>
<dbReference type="InterPro" id="IPR002347">
    <property type="entry name" value="SDR_fam"/>
</dbReference>
<dbReference type="NCBIfam" id="NF042950">
    <property type="entry name" value="3PPDhyd_Dh_HcaB"/>
    <property type="match status" value="1"/>
</dbReference>
<dbReference type="NCBIfam" id="NF004849">
    <property type="entry name" value="PRK06200.1"/>
    <property type="match status" value="1"/>
</dbReference>
<dbReference type="PANTHER" id="PTHR43943:SF17">
    <property type="entry name" value="3-PHENYLPROPIONATE-DIHYDRODIOL_CINNAMIC ACID-DIHYDRODIOL DEHYDROGENASE"/>
    <property type="match status" value="1"/>
</dbReference>
<dbReference type="PANTHER" id="PTHR43943">
    <property type="entry name" value="DEHYDROGENASE/REDUCTASE (SDR FAMILY) MEMBER 4"/>
    <property type="match status" value="1"/>
</dbReference>
<dbReference type="Pfam" id="PF00106">
    <property type="entry name" value="adh_short"/>
    <property type="match status" value="1"/>
</dbReference>
<dbReference type="PRINTS" id="PR00081">
    <property type="entry name" value="GDHRDH"/>
</dbReference>
<dbReference type="PRINTS" id="PR00080">
    <property type="entry name" value="SDRFAMILY"/>
</dbReference>
<dbReference type="SUPFAM" id="SSF51735">
    <property type="entry name" value="NAD(P)-binding Rossmann-fold domains"/>
    <property type="match status" value="1"/>
</dbReference>
<dbReference type="PROSITE" id="PS00061">
    <property type="entry name" value="ADH_SHORT"/>
    <property type="match status" value="1"/>
</dbReference>
<organism>
    <name type="scientific">Escherichia coli (strain 55989 / EAEC)</name>
    <dbReference type="NCBI Taxonomy" id="585055"/>
    <lineage>
        <taxon>Bacteria</taxon>
        <taxon>Pseudomonadati</taxon>
        <taxon>Pseudomonadota</taxon>
        <taxon>Gammaproteobacteria</taxon>
        <taxon>Enterobacterales</taxon>
        <taxon>Enterobacteriaceae</taxon>
        <taxon>Escherichia</taxon>
    </lineage>
</organism>
<reference key="1">
    <citation type="journal article" date="2009" name="PLoS Genet.">
        <title>Organised genome dynamics in the Escherichia coli species results in highly diverse adaptive paths.</title>
        <authorList>
            <person name="Touchon M."/>
            <person name="Hoede C."/>
            <person name="Tenaillon O."/>
            <person name="Barbe V."/>
            <person name="Baeriswyl S."/>
            <person name="Bidet P."/>
            <person name="Bingen E."/>
            <person name="Bonacorsi S."/>
            <person name="Bouchier C."/>
            <person name="Bouvet O."/>
            <person name="Calteau A."/>
            <person name="Chiapello H."/>
            <person name="Clermont O."/>
            <person name="Cruveiller S."/>
            <person name="Danchin A."/>
            <person name="Diard M."/>
            <person name="Dossat C."/>
            <person name="Karoui M.E."/>
            <person name="Frapy E."/>
            <person name="Garry L."/>
            <person name="Ghigo J.M."/>
            <person name="Gilles A.M."/>
            <person name="Johnson J."/>
            <person name="Le Bouguenec C."/>
            <person name="Lescat M."/>
            <person name="Mangenot S."/>
            <person name="Martinez-Jehanne V."/>
            <person name="Matic I."/>
            <person name="Nassif X."/>
            <person name="Oztas S."/>
            <person name="Petit M.A."/>
            <person name="Pichon C."/>
            <person name="Rouy Z."/>
            <person name="Ruf C.S."/>
            <person name="Schneider D."/>
            <person name="Tourret J."/>
            <person name="Vacherie B."/>
            <person name="Vallenet D."/>
            <person name="Medigue C."/>
            <person name="Rocha E.P.C."/>
            <person name="Denamur E."/>
        </authorList>
    </citation>
    <scope>NUCLEOTIDE SEQUENCE [LARGE SCALE GENOMIC DNA]</scope>
    <source>
        <strain>55989 / EAEC</strain>
    </source>
</reference>
<accession>B7LDD3</accession>
<name>HCAB_ECO55</name>
<feature type="chain" id="PRO_1000186963" description="3-phenylpropionate-dihydrodiol/cinnamic acid-dihydrodiol dehydrogenase">
    <location>
        <begin position="1"/>
        <end position="270"/>
    </location>
</feature>
<feature type="active site" description="Proton acceptor" evidence="1">
    <location>
        <position position="156"/>
    </location>
</feature>
<feature type="binding site" evidence="1">
    <location>
        <begin position="10"/>
        <end position="34"/>
    </location>
    <ligand>
        <name>NAD(+)</name>
        <dbReference type="ChEBI" id="CHEBI:57540"/>
    </ligand>
</feature>
<feature type="binding site" evidence="1">
    <location>
        <position position="143"/>
    </location>
    <ligand>
        <name>substrate</name>
    </ligand>
</feature>
<evidence type="ECO:0000255" key="1">
    <source>
        <dbReference type="HAMAP-Rule" id="MF_01647"/>
    </source>
</evidence>
<comment type="function">
    <text evidence="1">Converts 3-phenylpropionate-dihydrodiol (PP-dihydrodiol) and cinnamic acid-dihydrodiol (CI-dihydrodiol) into 3-(2,3-dihydroxylphenyl)propanoic acid (DHPP) and 2,3-dihydroxicinnamic acid (DHCI), respectively.</text>
</comment>
<comment type="catalytic activity">
    <reaction evidence="1">
        <text>3-(cis-5,6-dihydroxycyclohexa-1,3-dien-1-yl)propanoate + NAD(+) = 3-(2,3-dihydroxyphenyl)propanoate + NADH + H(+)</text>
        <dbReference type="Rhea" id="RHEA:25062"/>
        <dbReference type="ChEBI" id="CHEBI:15378"/>
        <dbReference type="ChEBI" id="CHEBI:46951"/>
        <dbReference type="ChEBI" id="CHEBI:57540"/>
        <dbReference type="ChEBI" id="CHEBI:57945"/>
        <dbReference type="ChEBI" id="CHEBI:60087"/>
        <dbReference type="EC" id="1.3.1.87"/>
    </reaction>
</comment>
<comment type="catalytic activity">
    <reaction evidence="1">
        <text>(2E)-3-(cis-5,6-dihydroxycyclohexa-1,3-dien-1-yl)prop-2-enoate + NAD(+) = (2E)-3-(2,3-dihydroxyphenyl)prop-2-enoate + NADH + H(+)</text>
        <dbReference type="Rhea" id="RHEA:25066"/>
        <dbReference type="ChEBI" id="CHEBI:15378"/>
        <dbReference type="ChEBI" id="CHEBI:57540"/>
        <dbReference type="ChEBI" id="CHEBI:57945"/>
        <dbReference type="ChEBI" id="CHEBI:58642"/>
        <dbReference type="ChEBI" id="CHEBI:61451"/>
        <dbReference type="EC" id="1.3.1.87"/>
    </reaction>
</comment>
<comment type="pathway">
    <text evidence="1">Aromatic compound metabolism; 3-phenylpropanoate degradation.</text>
</comment>
<comment type="similarity">
    <text evidence="1">Belongs to the short-chain dehydrogenases/reductases (SDR) family.</text>
</comment>
<proteinExistence type="inferred from homology"/>